<organism>
    <name type="scientific">Porphyromonas gingivalis (strain ATCC 33277 / DSM 20709 / CIP 103683 / JCM 12257 / NCTC 11834 / 2561)</name>
    <dbReference type="NCBI Taxonomy" id="431947"/>
    <lineage>
        <taxon>Bacteria</taxon>
        <taxon>Pseudomonadati</taxon>
        <taxon>Bacteroidota</taxon>
        <taxon>Bacteroidia</taxon>
        <taxon>Bacteroidales</taxon>
        <taxon>Porphyromonadaceae</taxon>
        <taxon>Porphyromonas</taxon>
    </lineage>
</organism>
<sequence>MKQQTETEKKVVLLGMSLEELTTVALRMGMPRFAGKQLAEWIYVRRATDFAEMTNISQANRQKLAEIYDLGRYPWSDVQCSVDGTKKYLFPVGEGRFVESVLIPEGDRATLCISSQVGCKMDCLFCMTGKQGWNGNLSAAEILNQIFSVDEAAELTNLVYMGMGEPLDNTDEVLRSIEALTEPWGMGWSPKRITVSTIGAKGLERFLAESRCHLAVSLHSPFPEERRKLMPGEKAFPIMQTLDRIRAYDFSGQRRVSFEYIVFDGLNDDMRHADELAAILRGIPCRINLIRFHKIPAVSLRSSDTARMEAFRKRMESHGYTCTIRASRGEDIFAACGMLSTSKAESSEEKSS</sequence>
<keyword id="KW-0004">4Fe-4S</keyword>
<keyword id="KW-0963">Cytoplasm</keyword>
<keyword id="KW-1015">Disulfide bond</keyword>
<keyword id="KW-0408">Iron</keyword>
<keyword id="KW-0411">Iron-sulfur</keyword>
<keyword id="KW-0479">Metal-binding</keyword>
<keyword id="KW-0489">Methyltransferase</keyword>
<keyword id="KW-0698">rRNA processing</keyword>
<keyword id="KW-0949">S-adenosyl-L-methionine</keyword>
<keyword id="KW-0808">Transferase</keyword>
<keyword id="KW-0819">tRNA processing</keyword>
<protein>
    <recommendedName>
        <fullName evidence="1">Probable dual-specificity RNA methyltransferase RlmN</fullName>
        <ecNumber evidence="1">2.1.1.192</ecNumber>
    </recommendedName>
    <alternativeName>
        <fullName evidence="1">23S rRNA (adenine(2503)-C(2))-methyltransferase</fullName>
    </alternativeName>
    <alternativeName>
        <fullName evidence="1">23S rRNA m2A2503 methyltransferase</fullName>
    </alternativeName>
    <alternativeName>
        <fullName evidence="1">Ribosomal RNA large subunit methyltransferase N</fullName>
    </alternativeName>
    <alternativeName>
        <fullName evidence="1">tRNA (adenine(37)-C(2))-methyltransferase</fullName>
    </alternativeName>
    <alternativeName>
        <fullName evidence="1">tRNA m2A37 methyltransferase</fullName>
    </alternativeName>
</protein>
<reference key="1">
    <citation type="journal article" date="2008" name="DNA Res.">
        <title>Determination of the genome sequence of Porphyromonas gingivalis strain ATCC 33277 and genomic comparison with strain W83 revealed extensive genome rearrangements in P. gingivalis.</title>
        <authorList>
            <person name="Naito M."/>
            <person name="Hirakawa H."/>
            <person name="Yamashita A."/>
            <person name="Ohara N."/>
            <person name="Shoji M."/>
            <person name="Yukitake H."/>
            <person name="Nakayama K."/>
            <person name="Toh H."/>
            <person name="Yoshimura F."/>
            <person name="Kuhara S."/>
            <person name="Hattori M."/>
            <person name="Hayashi T."/>
            <person name="Nakayama K."/>
        </authorList>
    </citation>
    <scope>NUCLEOTIDE SEQUENCE [LARGE SCALE GENOMIC DNA]</scope>
    <source>
        <strain>ATCC 33277 / DSM 20709 / CIP 103683 / JCM 12257 / NCTC 11834 / 2561</strain>
    </source>
</reference>
<accession>B2RMI0</accession>
<name>RLMN_PORG3</name>
<evidence type="ECO:0000255" key="1">
    <source>
        <dbReference type="HAMAP-Rule" id="MF_01849"/>
    </source>
</evidence>
<evidence type="ECO:0000255" key="2">
    <source>
        <dbReference type="PROSITE-ProRule" id="PRU01266"/>
    </source>
</evidence>
<feature type="chain" id="PRO_1000216123" description="Probable dual-specificity RNA methyltransferase RlmN">
    <location>
        <begin position="1"/>
        <end position="352"/>
    </location>
</feature>
<feature type="domain" description="Radical SAM core" evidence="2">
    <location>
        <begin position="105"/>
        <end position="325"/>
    </location>
</feature>
<feature type="active site" description="Proton acceptor" evidence="1">
    <location>
        <position position="99"/>
    </location>
</feature>
<feature type="active site" description="S-methylcysteine intermediate" evidence="1">
    <location>
        <position position="336"/>
    </location>
</feature>
<feature type="binding site" evidence="1">
    <location>
        <position position="119"/>
    </location>
    <ligand>
        <name>[4Fe-4S] cluster</name>
        <dbReference type="ChEBI" id="CHEBI:49883"/>
        <note>4Fe-4S-S-AdoMet</note>
    </ligand>
</feature>
<feature type="binding site" evidence="1">
    <location>
        <position position="123"/>
    </location>
    <ligand>
        <name>[4Fe-4S] cluster</name>
        <dbReference type="ChEBI" id="CHEBI:49883"/>
        <note>4Fe-4S-S-AdoMet</note>
    </ligand>
</feature>
<feature type="binding site" evidence="1">
    <location>
        <position position="126"/>
    </location>
    <ligand>
        <name>[4Fe-4S] cluster</name>
        <dbReference type="ChEBI" id="CHEBI:49883"/>
        <note>4Fe-4S-S-AdoMet</note>
    </ligand>
</feature>
<feature type="binding site" evidence="1">
    <location>
        <begin position="164"/>
        <end position="165"/>
    </location>
    <ligand>
        <name>S-adenosyl-L-methionine</name>
        <dbReference type="ChEBI" id="CHEBI:59789"/>
    </ligand>
</feature>
<feature type="binding site" evidence="1">
    <location>
        <position position="196"/>
    </location>
    <ligand>
        <name>S-adenosyl-L-methionine</name>
        <dbReference type="ChEBI" id="CHEBI:59789"/>
    </ligand>
</feature>
<feature type="binding site" evidence="1">
    <location>
        <begin position="217"/>
        <end position="219"/>
    </location>
    <ligand>
        <name>S-adenosyl-L-methionine</name>
        <dbReference type="ChEBI" id="CHEBI:59789"/>
    </ligand>
</feature>
<feature type="binding site" evidence="1">
    <location>
        <position position="293"/>
    </location>
    <ligand>
        <name>S-adenosyl-L-methionine</name>
        <dbReference type="ChEBI" id="CHEBI:59789"/>
    </ligand>
</feature>
<feature type="disulfide bond" description="(transient)" evidence="1">
    <location>
        <begin position="112"/>
        <end position="336"/>
    </location>
</feature>
<proteinExistence type="inferred from homology"/>
<gene>
    <name evidence="1" type="primary">rlmN</name>
    <name type="ordered locus">PGN_2057</name>
</gene>
<comment type="function">
    <text evidence="1">Specifically methylates position 2 of adenine 2503 in 23S rRNA and position 2 of adenine 37 in tRNAs.</text>
</comment>
<comment type="catalytic activity">
    <reaction evidence="1">
        <text>adenosine(2503) in 23S rRNA + 2 reduced [2Fe-2S]-[ferredoxin] + 2 S-adenosyl-L-methionine = 2-methyladenosine(2503) in 23S rRNA + 5'-deoxyadenosine + L-methionine + 2 oxidized [2Fe-2S]-[ferredoxin] + S-adenosyl-L-homocysteine</text>
        <dbReference type="Rhea" id="RHEA:42916"/>
        <dbReference type="Rhea" id="RHEA-COMP:10000"/>
        <dbReference type="Rhea" id="RHEA-COMP:10001"/>
        <dbReference type="Rhea" id="RHEA-COMP:10152"/>
        <dbReference type="Rhea" id="RHEA-COMP:10282"/>
        <dbReference type="ChEBI" id="CHEBI:17319"/>
        <dbReference type="ChEBI" id="CHEBI:33737"/>
        <dbReference type="ChEBI" id="CHEBI:33738"/>
        <dbReference type="ChEBI" id="CHEBI:57844"/>
        <dbReference type="ChEBI" id="CHEBI:57856"/>
        <dbReference type="ChEBI" id="CHEBI:59789"/>
        <dbReference type="ChEBI" id="CHEBI:74411"/>
        <dbReference type="ChEBI" id="CHEBI:74497"/>
        <dbReference type="EC" id="2.1.1.192"/>
    </reaction>
</comment>
<comment type="catalytic activity">
    <reaction evidence="1">
        <text>adenosine(37) in tRNA + 2 reduced [2Fe-2S]-[ferredoxin] + 2 S-adenosyl-L-methionine = 2-methyladenosine(37) in tRNA + 5'-deoxyadenosine + L-methionine + 2 oxidized [2Fe-2S]-[ferredoxin] + S-adenosyl-L-homocysteine</text>
        <dbReference type="Rhea" id="RHEA:43332"/>
        <dbReference type="Rhea" id="RHEA-COMP:10000"/>
        <dbReference type="Rhea" id="RHEA-COMP:10001"/>
        <dbReference type="Rhea" id="RHEA-COMP:10162"/>
        <dbReference type="Rhea" id="RHEA-COMP:10485"/>
        <dbReference type="ChEBI" id="CHEBI:17319"/>
        <dbReference type="ChEBI" id="CHEBI:33737"/>
        <dbReference type="ChEBI" id="CHEBI:33738"/>
        <dbReference type="ChEBI" id="CHEBI:57844"/>
        <dbReference type="ChEBI" id="CHEBI:57856"/>
        <dbReference type="ChEBI" id="CHEBI:59789"/>
        <dbReference type="ChEBI" id="CHEBI:74411"/>
        <dbReference type="ChEBI" id="CHEBI:74497"/>
        <dbReference type="EC" id="2.1.1.192"/>
    </reaction>
</comment>
<comment type="cofactor">
    <cofactor evidence="1">
        <name>[4Fe-4S] cluster</name>
        <dbReference type="ChEBI" id="CHEBI:49883"/>
    </cofactor>
    <text evidence="1">Binds 1 [4Fe-4S] cluster. The cluster is coordinated with 3 cysteines and an exchangeable S-adenosyl-L-methionine.</text>
</comment>
<comment type="subcellular location">
    <subcellularLocation>
        <location evidence="1">Cytoplasm</location>
    </subcellularLocation>
</comment>
<comment type="miscellaneous">
    <text evidence="1">Reaction proceeds by a ping-pong mechanism involving intermediate methylation of a conserved cysteine residue.</text>
</comment>
<comment type="similarity">
    <text evidence="1">Belongs to the radical SAM superfamily. RlmN family.</text>
</comment>
<dbReference type="EC" id="2.1.1.192" evidence="1"/>
<dbReference type="EMBL" id="AP009380">
    <property type="protein sequence ID" value="BAG34575.1"/>
    <property type="molecule type" value="Genomic_DNA"/>
</dbReference>
<dbReference type="RefSeq" id="WP_012458719.1">
    <property type="nucleotide sequence ID" value="NZ_CP025930.1"/>
</dbReference>
<dbReference type="SMR" id="B2RMI0"/>
<dbReference type="GeneID" id="29257195"/>
<dbReference type="KEGG" id="pgn:PGN_2057"/>
<dbReference type="eggNOG" id="COG0820">
    <property type="taxonomic scope" value="Bacteria"/>
</dbReference>
<dbReference type="HOGENOM" id="CLU_029101_0_0_10"/>
<dbReference type="OrthoDB" id="9793973at2"/>
<dbReference type="BioCyc" id="PGIN431947:G1G2V-2293-MONOMER"/>
<dbReference type="Proteomes" id="UP000008842">
    <property type="component" value="Chromosome"/>
</dbReference>
<dbReference type="GO" id="GO:0005737">
    <property type="term" value="C:cytoplasm"/>
    <property type="evidence" value="ECO:0007669"/>
    <property type="project" value="UniProtKB-SubCell"/>
</dbReference>
<dbReference type="GO" id="GO:0051539">
    <property type="term" value="F:4 iron, 4 sulfur cluster binding"/>
    <property type="evidence" value="ECO:0007669"/>
    <property type="project" value="UniProtKB-UniRule"/>
</dbReference>
<dbReference type="GO" id="GO:0046872">
    <property type="term" value="F:metal ion binding"/>
    <property type="evidence" value="ECO:0007669"/>
    <property type="project" value="UniProtKB-KW"/>
</dbReference>
<dbReference type="GO" id="GO:0070040">
    <property type="term" value="F:rRNA (adenine(2503)-C2-)-methyltransferase activity"/>
    <property type="evidence" value="ECO:0007669"/>
    <property type="project" value="UniProtKB-UniRule"/>
</dbReference>
<dbReference type="GO" id="GO:0019843">
    <property type="term" value="F:rRNA binding"/>
    <property type="evidence" value="ECO:0007669"/>
    <property type="project" value="UniProtKB-UniRule"/>
</dbReference>
<dbReference type="GO" id="GO:0002935">
    <property type="term" value="F:tRNA (adenine(37)-C2)-methyltransferase activity"/>
    <property type="evidence" value="ECO:0007669"/>
    <property type="project" value="UniProtKB-UniRule"/>
</dbReference>
<dbReference type="GO" id="GO:0000049">
    <property type="term" value="F:tRNA binding"/>
    <property type="evidence" value="ECO:0007669"/>
    <property type="project" value="UniProtKB-UniRule"/>
</dbReference>
<dbReference type="GO" id="GO:0070475">
    <property type="term" value="P:rRNA base methylation"/>
    <property type="evidence" value="ECO:0007669"/>
    <property type="project" value="UniProtKB-UniRule"/>
</dbReference>
<dbReference type="GO" id="GO:0030488">
    <property type="term" value="P:tRNA methylation"/>
    <property type="evidence" value="ECO:0007669"/>
    <property type="project" value="UniProtKB-UniRule"/>
</dbReference>
<dbReference type="CDD" id="cd01335">
    <property type="entry name" value="Radical_SAM"/>
    <property type="match status" value="1"/>
</dbReference>
<dbReference type="Gene3D" id="1.10.150.530">
    <property type="match status" value="1"/>
</dbReference>
<dbReference type="Gene3D" id="3.20.20.70">
    <property type="entry name" value="Aldolase class I"/>
    <property type="match status" value="1"/>
</dbReference>
<dbReference type="HAMAP" id="MF_01849">
    <property type="entry name" value="RNA_methyltr_RlmN"/>
    <property type="match status" value="1"/>
</dbReference>
<dbReference type="InterPro" id="IPR013785">
    <property type="entry name" value="Aldolase_TIM"/>
</dbReference>
<dbReference type="InterPro" id="IPR040072">
    <property type="entry name" value="Methyltransferase_A"/>
</dbReference>
<dbReference type="InterPro" id="IPR048641">
    <property type="entry name" value="RlmN_N"/>
</dbReference>
<dbReference type="InterPro" id="IPR027492">
    <property type="entry name" value="RNA_MTrfase_RlmN"/>
</dbReference>
<dbReference type="InterPro" id="IPR004383">
    <property type="entry name" value="rRNA_lsu_MTrfase_RlmN/Cfr"/>
</dbReference>
<dbReference type="InterPro" id="IPR007197">
    <property type="entry name" value="rSAM"/>
</dbReference>
<dbReference type="NCBIfam" id="TIGR00048">
    <property type="entry name" value="rRNA_mod_RlmN"/>
    <property type="match status" value="1"/>
</dbReference>
<dbReference type="PANTHER" id="PTHR30544">
    <property type="entry name" value="23S RRNA METHYLTRANSFERASE"/>
    <property type="match status" value="1"/>
</dbReference>
<dbReference type="PANTHER" id="PTHR30544:SF5">
    <property type="entry name" value="RADICAL SAM CORE DOMAIN-CONTAINING PROTEIN"/>
    <property type="match status" value="1"/>
</dbReference>
<dbReference type="Pfam" id="PF04055">
    <property type="entry name" value="Radical_SAM"/>
    <property type="match status" value="1"/>
</dbReference>
<dbReference type="Pfam" id="PF21016">
    <property type="entry name" value="RlmN_N"/>
    <property type="match status" value="1"/>
</dbReference>
<dbReference type="PIRSF" id="PIRSF006004">
    <property type="entry name" value="CHP00048"/>
    <property type="match status" value="1"/>
</dbReference>
<dbReference type="SFLD" id="SFLDF00275">
    <property type="entry name" value="adenosine_C2_methyltransferase"/>
    <property type="match status" value="1"/>
</dbReference>
<dbReference type="SFLD" id="SFLDG01062">
    <property type="entry name" value="methyltransferase_(Class_A)"/>
    <property type="match status" value="1"/>
</dbReference>
<dbReference type="SUPFAM" id="SSF102114">
    <property type="entry name" value="Radical SAM enzymes"/>
    <property type="match status" value="1"/>
</dbReference>
<dbReference type="PROSITE" id="PS51918">
    <property type="entry name" value="RADICAL_SAM"/>
    <property type="match status" value="1"/>
</dbReference>